<feature type="chain" id="PRO_0000445088" description="Embryonic testis differentiation protein homolog A">
    <location>
        <begin position="1"/>
        <end position="59"/>
    </location>
</feature>
<feature type="region of interest" description="Disordered" evidence="1">
    <location>
        <begin position="1"/>
        <end position="25"/>
    </location>
</feature>
<feature type="compositionally biased region" description="Basic and acidic residues" evidence="1">
    <location>
        <begin position="1"/>
        <end position="10"/>
    </location>
</feature>
<gene>
    <name evidence="3" type="primary">ETDA</name>
</gene>
<reference key="1">
    <citation type="submission" date="2004-08" db="EMBL/GenBank/DDBJ databases">
        <title>Palindromes on the human X chromosome.</title>
        <authorList>
            <person name="Saionz J.R."/>
            <person name="Skaletsky H."/>
            <person name="Rozen S."/>
            <person name="Page D.C."/>
        </authorList>
    </citation>
    <scope>NUCLEOTIDE SEQUENCE [MRNA]</scope>
</reference>
<reference key="2">
    <citation type="journal article" date="2005" name="Nature">
        <title>The DNA sequence of the human X chromosome.</title>
        <authorList>
            <person name="Ross M.T."/>
            <person name="Grafham D.V."/>
            <person name="Coffey A.J."/>
            <person name="Scherer S."/>
            <person name="McLay K."/>
            <person name="Muzny D."/>
            <person name="Platzer M."/>
            <person name="Howell G.R."/>
            <person name="Burrows C."/>
            <person name="Bird C.P."/>
            <person name="Frankish A."/>
            <person name="Lovell F.L."/>
            <person name="Howe K.L."/>
            <person name="Ashurst J.L."/>
            <person name="Fulton R.S."/>
            <person name="Sudbrak R."/>
            <person name="Wen G."/>
            <person name="Jones M.C."/>
            <person name="Hurles M.E."/>
            <person name="Andrews T.D."/>
            <person name="Scott C.E."/>
            <person name="Searle S."/>
            <person name="Ramser J."/>
            <person name="Whittaker A."/>
            <person name="Deadman R."/>
            <person name="Carter N.P."/>
            <person name="Hunt S.E."/>
            <person name="Chen R."/>
            <person name="Cree A."/>
            <person name="Gunaratne P."/>
            <person name="Havlak P."/>
            <person name="Hodgson A."/>
            <person name="Metzker M.L."/>
            <person name="Richards S."/>
            <person name="Scott G."/>
            <person name="Steffen D."/>
            <person name="Sodergren E."/>
            <person name="Wheeler D.A."/>
            <person name="Worley K.C."/>
            <person name="Ainscough R."/>
            <person name="Ambrose K.D."/>
            <person name="Ansari-Lari M.A."/>
            <person name="Aradhya S."/>
            <person name="Ashwell R.I."/>
            <person name="Babbage A.K."/>
            <person name="Bagguley C.L."/>
            <person name="Ballabio A."/>
            <person name="Banerjee R."/>
            <person name="Barker G.E."/>
            <person name="Barlow K.F."/>
            <person name="Barrett I.P."/>
            <person name="Bates K.N."/>
            <person name="Beare D.M."/>
            <person name="Beasley H."/>
            <person name="Beasley O."/>
            <person name="Beck A."/>
            <person name="Bethel G."/>
            <person name="Blechschmidt K."/>
            <person name="Brady N."/>
            <person name="Bray-Allen S."/>
            <person name="Bridgeman A.M."/>
            <person name="Brown A.J."/>
            <person name="Brown M.J."/>
            <person name="Bonnin D."/>
            <person name="Bruford E.A."/>
            <person name="Buhay C."/>
            <person name="Burch P."/>
            <person name="Burford D."/>
            <person name="Burgess J."/>
            <person name="Burrill W."/>
            <person name="Burton J."/>
            <person name="Bye J.M."/>
            <person name="Carder C."/>
            <person name="Carrel L."/>
            <person name="Chako J."/>
            <person name="Chapman J.C."/>
            <person name="Chavez D."/>
            <person name="Chen E."/>
            <person name="Chen G."/>
            <person name="Chen Y."/>
            <person name="Chen Z."/>
            <person name="Chinault C."/>
            <person name="Ciccodicola A."/>
            <person name="Clark S.Y."/>
            <person name="Clarke G."/>
            <person name="Clee C.M."/>
            <person name="Clegg S."/>
            <person name="Clerc-Blankenburg K."/>
            <person name="Clifford K."/>
            <person name="Cobley V."/>
            <person name="Cole C.G."/>
            <person name="Conquer J.S."/>
            <person name="Corby N."/>
            <person name="Connor R.E."/>
            <person name="David R."/>
            <person name="Davies J."/>
            <person name="Davis C."/>
            <person name="Davis J."/>
            <person name="Delgado O."/>
            <person name="Deshazo D."/>
            <person name="Dhami P."/>
            <person name="Ding Y."/>
            <person name="Dinh H."/>
            <person name="Dodsworth S."/>
            <person name="Draper H."/>
            <person name="Dugan-Rocha S."/>
            <person name="Dunham A."/>
            <person name="Dunn M."/>
            <person name="Durbin K.J."/>
            <person name="Dutta I."/>
            <person name="Eades T."/>
            <person name="Ellwood M."/>
            <person name="Emery-Cohen A."/>
            <person name="Errington H."/>
            <person name="Evans K.L."/>
            <person name="Faulkner L."/>
            <person name="Francis F."/>
            <person name="Frankland J."/>
            <person name="Fraser A.E."/>
            <person name="Galgoczy P."/>
            <person name="Gilbert J."/>
            <person name="Gill R."/>
            <person name="Gloeckner G."/>
            <person name="Gregory S.G."/>
            <person name="Gribble S."/>
            <person name="Griffiths C."/>
            <person name="Grocock R."/>
            <person name="Gu Y."/>
            <person name="Gwilliam R."/>
            <person name="Hamilton C."/>
            <person name="Hart E.A."/>
            <person name="Hawes A."/>
            <person name="Heath P.D."/>
            <person name="Heitmann K."/>
            <person name="Hennig S."/>
            <person name="Hernandez J."/>
            <person name="Hinzmann B."/>
            <person name="Ho S."/>
            <person name="Hoffs M."/>
            <person name="Howden P.J."/>
            <person name="Huckle E.J."/>
            <person name="Hume J."/>
            <person name="Hunt P.J."/>
            <person name="Hunt A.R."/>
            <person name="Isherwood J."/>
            <person name="Jacob L."/>
            <person name="Johnson D."/>
            <person name="Jones S."/>
            <person name="de Jong P.J."/>
            <person name="Joseph S.S."/>
            <person name="Keenan S."/>
            <person name="Kelly S."/>
            <person name="Kershaw J.K."/>
            <person name="Khan Z."/>
            <person name="Kioschis P."/>
            <person name="Klages S."/>
            <person name="Knights A.J."/>
            <person name="Kosiura A."/>
            <person name="Kovar-Smith C."/>
            <person name="Laird G.K."/>
            <person name="Langford C."/>
            <person name="Lawlor S."/>
            <person name="Leversha M."/>
            <person name="Lewis L."/>
            <person name="Liu W."/>
            <person name="Lloyd C."/>
            <person name="Lloyd D.M."/>
            <person name="Loulseged H."/>
            <person name="Loveland J.E."/>
            <person name="Lovell J.D."/>
            <person name="Lozado R."/>
            <person name="Lu J."/>
            <person name="Lyne R."/>
            <person name="Ma J."/>
            <person name="Maheshwari M."/>
            <person name="Matthews L.H."/>
            <person name="McDowall J."/>
            <person name="McLaren S."/>
            <person name="McMurray A."/>
            <person name="Meidl P."/>
            <person name="Meitinger T."/>
            <person name="Milne S."/>
            <person name="Miner G."/>
            <person name="Mistry S.L."/>
            <person name="Morgan M."/>
            <person name="Morris S."/>
            <person name="Mueller I."/>
            <person name="Mullikin J.C."/>
            <person name="Nguyen N."/>
            <person name="Nordsiek G."/>
            <person name="Nyakatura G."/>
            <person name="O'dell C.N."/>
            <person name="Okwuonu G."/>
            <person name="Palmer S."/>
            <person name="Pandian R."/>
            <person name="Parker D."/>
            <person name="Parrish J."/>
            <person name="Pasternak S."/>
            <person name="Patel D."/>
            <person name="Pearce A.V."/>
            <person name="Pearson D.M."/>
            <person name="Pelan S.E."/>
            <person name="Perez L."/>
            <person name="Porter K.M."/>
            <person name="Ramsey Y."/>
            <person name="Reichwald K."/>
            <person name="Rhodes S."/>
            <person name="Ridler K.A."/>
            <person name="Schlessinger D."/>
            <person name="Schueler M.G."/>
            <person name="Sehra H.K."/>
            <person name="Shaw-Smith C."/>
            <person name="Shen H."/>
            <person name="Sheridan E.M."/>
            <person name="Shownkeen R."/>
            <person name="Skuce C.D."/>
            <person name="Smith M.L."/>
            <person name="Sotheran E.C."/>
            <person name="Steingruber H.E."/>
            <person name="Steward C.A."/>
            <person name="Storey R."/>
            <person name="Swann R.M."/>
            <person name="Swarbreck D."/>
            <person name="Tabor P.E."/>
            <person name="Taudien S."/>
            <person name="Taylor T."/>
            <person name="Teague B."/>
            <person name="Thomas K."/>
            <person name="Thorpe A."/>
            <person name="Timms K."/>
            <person name="Tracey A."/>
            <person name="Trevanion S."/>
            <person name="Tromans A.C."/>
            <person name="d'Urso M."/>
            <person name="Verduzco D."/>
            <person name="Villasana D."/>
            <person name="Waldron L."/>
            <person name="Wall M."/>
            <person name="Wang Q."/>
            <person name="Warren J."/>
            <person name="Warry G.L."/>
            <person name="Wei X."/>
            <person name="West A."/>
            <person name="Whitehead S.L."/>
            <person name="Whiteley M.N."/>
            <person name="Wilkinson J.E."/>
            <person name="Willey D.L."/>
            <person name="Williams G."/>
            <person name="Williams L."/>
            <person name="Williamson A."/>
            <person name="Williamson H."/>
            <person name="Wilming L."/>
            <person name="Woodmansey R.L."/>
            <person name="Wray P.W."/>
            <person name="Yen J."/>
            <person name="Zhang J."/>
            <person name="Zhou J."/>
            <person name="Zoghbi H."/>
            <person name="Zorilla S."/>
            <person name="Buck D."/>
            <person name="Reinhardt R."/>
            <person name="Poustka A."/>
            <person name="Rosenthal A."/>
            <person name="Lehrach H."/>
            <person name="Meindl A."/>
            <person name="Minx P.J."/>
            <person name="Hillier L.W."/>
            <person name="Willard H.F."/>
            <person name="Wilson R.K."/>
            <person name="Waterston R.H."/>
            <person name="Rice C.M."/>
            <person name="Vaudin M."/>
            <person name="Coulson A."/>
            <person name="Nelson D.L."/>
            <person name="Weinstock G."/>
            <person name="Sulston J.E."/>
            <person name="Durbin R.M."/>
            <person name="Hubbard T."/>
            <person name="Gibbs R.A."/>
            <person name="Beck S."/>
            <person name="Rogers J."/>
            <person name="Bentley D.R."/>
        </authorList>
    </citation>
    <scope>NUCLEOTIDE SEQUENCE [LARGE SCALE GENOMIC DNA]</scope>
</reference>
<protein>
    <recommendedName>
        <fullName evidence="2">Embryonic testis differentiation protein homolog A</fullName>
    </recommendedName>
</protein>
<dbReference type="EMBL" id="AY730280">
    <property type="protein sequence ID" value="AAW56973.1"/>
    <property type="molecule type" value="mRNA"/>
</dbReference>
<dbReference type="EMBL" id="AC234771">
    <property type="status" value="NOT_ANNOTATED_CDS"/>
    <property type="molecule type" value="Genomic_DNA"/>
</dbReference>
<dbReference type="CCDS" id="CCDS87781.1"/>
<dbReference type="RefSeq" id="NP_001342451.1">
    <property type="nucleotide sequence ID" value="NM_001355522.1"/>
</dbReference>
<dbReference type="STRING" id="9606.ENSP00000490055"/>
<dbReference type="BioMuta" id="ETDB"/>
<dbReference type="MassIVE" id="Q3ZM63"/>
<dbReference type="Ensembl" id="ENST00000427686.3">
    <property type="protein sequence ID" value="ENSP00000490055.1"/>
    <property type="gene ID" value="ENSG00000238210.4"/>
</dbReference>
<dbReference type="Ensembl" id="ENST00000454551.1">
    <property type="protein sequence ID" value="ENSP00000490960.1"/>
    <property type="gene ID" value="ENSG00000238210.4"/>
</dbReference>
<dbReference type="GeneID" id="101928677"/>
<dbReference type="MANE-Select" id="ENST00000427686.3">
    <property type="protein sequence ID" value="ENSP00000490055.1"/>
    <property type="RefSeq nucleotide sequence ID" value="NM_001355522.1"/>
    <property type="RefSeq protein sequence ID" value="NP_001342451.1"/>
</dbReference>
<dbReference type="AGR" id="HGNC:53449"/>
<dbReference type="GeneCards" id="ETDA"/>
<dbReference type="HGNC" id="HGNC:53449">
    <property type="gene designation" value="ETDA"/>
</dbReference>
<dbReference type="HPA" id="ENSG00000238210">
    <property type="expression patterns" value="Tissue enriched (testis)"/>
</dbReference>
<dbReference type="neXtProt" id="NX_Q3ZM63"/>
<dbReference type="VEuPathDB" id="HostDB:ENSG00000238210"/>
<dbReference type="GeneTree" id="ENSGT01130000278374"/>
<dbReference type="InParanoid" id="Q3ZM63"/>
<dbReference type="OMA" id="RCFTEVV"/>
<dbReference type="OrthoDB" id="9704139at2759"/>
<dbReference type="PAN-GO" id="Q3ZM63">
    <property type="GO annotations" value="0 GO annotations based on evolutionary models"/>
</dbReference>
<dbReference type="Pharos" id="Q3ZM63">
    <property type="development level" value="Tdark"/>
</dbReference>
<dbReference type="PRO" id="PR:Q3ZM63"/>
<dbReference type="Proteomes" id="UP000005640">
    <property type="component" value="Chromosome X"/>
</dbReference>
<dbReference type="RNAct" id="Q3ZM63">
    <property type="molecule type" value="protein"/>
</dbReference>
<dbReference type="Bgee" id="ENSG00000238210">
    <property type="expression patterns" value="Expressed in male germ line stem cell (sensu Vertebrata) in testis and 83 other cell types or tissues"/>
</dbReference>
<name>ETDA_HUMAN</name>
<organism>
    <name type="scientific">Homo sapiens</name>
    <name type="common">Human</name>
    <dbReference type="NCBI Taxonomy" id="9606"/>
    <lineage>
        <taxon>Eukaryota</taxon>
        <taxon>Metazoa</taxon>
        <taxon>Chordata</taxon>
        <taxon>Craniata</taxon>
        <taxon>Vertebrata</taxon>
        <taxon>Euteleostomi</taxon>
        <taxon>Mammalia</taxon>
        <taxon>Eutheria</taxon>
        <taxon>Euarchontoglires</taxon>
        <taxon>Primates</taxon>
        <taxon>Haplorrhini</taxon>
        <taxon>Catarrhini</taxon>
        <taxon>Hominidae</taxon>
        <taxon>Homo</taxon>
    </lineage>
</organism>
<keyword id="KW-1185">Reference proteome</keyword>
<evidence type="ECO:0000256" key="1">
    <source>
        <dbReference type="SAM" id="MobiDB-lite"/>
    </source>
</evidence>
<evidence type="ECO:0000305" key="2"/>
<evidence type="ECO:0000312" key="3">
    <source>
        <dbReference type="HGNC" id="HGNC:53449"/>
    </source>
</evidence>
<proteinExistence type="predicted"/>
<accession>Q3ZM63</accession>
<sequence length="59" mass="6991">MDKEVPKGSPREPALNIKKSDKSFKRKKPTENVLIFLINRQLGRHRSDIDLSRWVWMLS</sequence>